<organism>
    <name type="scientific">Podospora anserina (strain S / ATCC MYA-4624 / DSM 980 / FGSC 10383)</name>
    <name type="common">Pleurage anserina</name>
    <dbReference type="NCBI Taxonomy" id="515849"/>
    <lineage>
        <taxon>Eukaryota</taxon>
        <taxon>Fungi</taxon>
        <taxon>Dikarya</taxon>
        <taxon>Ascomycota</taxon>
        <taxon>Pezizomycotina</taxon>
        <taxon>Sordariomycetes</taxon>
        <taxon>Sordariomycetidae</taxon>
        <taxon>Sordariales</taxon>
        <taxon>Podosporaceae</taxon>
        <taxon>Podospora</taxon>
        <taxon>Podospora anserina</taxon>
    </lineage>
</organism>
<name>KAD2_PODAN</name>
<protein>
    <recommendedName>
        <fullName evidence="1">Adenylate kinase</fullName>
        <ecNumber evidence="1">2.7.4.3</ecNumber>
    </recommendedName>
    <alternativeName>
        <fullName evidence="1">ATP-AMP transphosphorylase</fullName>
    </alternativeName>
    <alternativeName>
        <fullName evidence="1">ATP:AMP phosphotransferase</fullName>
    </alternativeName>
    <alternativeName>
        <fullName evidence="1">Adenylate kinase cytosolic and mitochondrial</fullName>
    </alternativeName>
    <alternativeName>
        <fullName evidence="1">Adenylate monophosphate kinase</fullName>
    </alternativeName>
</protein>
<keyword id="KW-0067">ATP-binding</keyword>
<keyword id="KW-0963">Cytoplasm</keyword>
<keyword id="KW-0418">Kinase</keyword>
<keyword id="KW-0496">Mitochondrion</keyword>
<keyword id="KW-0547">Nucleotide-binding</keyword>
<keyword id="KW-1185">Reference proteome</keyword>
<keyword id="KW-0808">Transferase</keyword>
<sequence length="276" mass="30374">MGYIDDEVKRLQGVIANLEGRVQALETKQFGPSSQKKTVEEVRAILIGPPGAGKGTQAPRLKEKFNCCHLATGDMLRSQVAKKTPLGQAAKKIMDAGGLVSDEIVIGMIKEELDNNKECKGGFILDGFPRTVPQAEGLDKMLRERNQTLQHAVELKIDDELLVARITGRLVHPASGRSYHVKFNPPKKEMTDDITGEPLIQRSDDNADALKKRLETYHKQTTPVVNYYQKTGIWKAIDASQEPGQVWKSLLAIFDGDKSKASKAGSTILSKLTHSS</sequence>
<comment type="function">
    <text evidence="1">Catalyzes the reversible transfer of the terminal phosphate group between ATP and AMP. Plays an important role in cellular energy homeostasis and in adenine nucleotide metabolism. Adenylate kinase activity is critical for regulation of the phosphate utilization and the AMP de novo biosynthesis pathways.</text>
</comment>
<comment type="catalytic activity">
    <reaction evidence="1">
        <text>AMP + ATP = 2 ADP</text>
        <dbReference type="Rhea" id="RHEA:12973"/>
        <dbReference type="ChEBI" id="CHEBI:30616"/>
        <dbReference type="ChEBI" id="CHEBI:456215"/>
        <dbReference type="ChEBI" id="CHEBI:456216"/>
        <dbReference type="EC" id="2.7.4.3"/>
    </reaction>
</comment>
<comment type="subunit">
    <text evidence="1">Monomer.</text>
</comment>
<comment type="subcellular location">
    <subcellularLocation>
        <location evidence="1">Cytoplasm</location>
        <location evidence="1">Cytosol</location>
    </subcellularLocation>
    <subcellularLocation>
        <location evidence="1">Mitochondrion intermembrane space</location>
    </subcellularLocation>
    <text evidence="1">Predominantly mitochondrial.</text>
</comment>
<comment type="domain">
    <text evidence="1">Consists of three domains, a large central CORE domain and two small peripheral domains, NMPbind and LID, which undergo movements during catalysis. The LID domain closes over the site of phosphoryl transfer upon ATP binding. Assembling and dissambling the active center during each catalytic cycle provides an effective means to prevent ATP hydrolysis.</text>
</comment>
<comment type="similarity">
    <text evidence="1">Belongs to the adenylate kinase family. AK2 subfamily.</text>
</comment>
<feature type="chain" id="PRO_0000365685" description="Adenylate kinase">
    <location>
        <begin position="1"/>
        <end position="276"/>
    </location>
</feature>
<feature type="region of interest" description="NMP" evidence="1">
    <location>
        <begin position="71"/>
        <end position="100"/>
    </location>
</feature>
<feature type="region of interest" description="LID" evidence="1">
    <location>
        <begin position="168"/>
        <end position="205"/>
    </location>
</feature>
<feature type="binding site" evidence="1">
    <location>
        <begin position="51"/>
        <end position="56"/>
    </location>
    <ligand>
        <name>ATP</name>
        <dbReference type="ChEBI" id="CHEBI:30616"/>
    </ligand>
</feature>
<feature type="binding site" evidence="1">
    <location>
        <position position="72"/>
    </location>
    <ligand>
        <name>AMP</name>
        <dbReference type="ChEBI" id="CHEBI:456215"/>
    </ligand>
</feature>
<feature type="binding site" evidence="1">
    <location>
        <position position="77"/>
    </location>
    <ligand>
        <name>AMP</name>
        <dbReference type="ChEBI" id="CHEBI:456215"/>
    </ligand>
</feature>
<feature type="binding site" evidence="1">
    <location>
        <begin position="98"/>
        <end position="100"/>
    </location>
    <ligand>
        <name>AMP</name>
        <dbReference type="ChEBI" id="CHEBI:456215"/>
    </ligand>
</feature>
<feature type="binding site" evidence="1">
    <location>
        <begin position="127"/>
        <end position="130"/>
    </location>
    <ligand>
        <name>AMP</name>
        <dbReference type="ChEBI" id="CHEBI:456215"/>
    </ligand>
</feature>
<feature type="binding site" evidence="1">
    <location>
        <position position="134"/>
    </location>
    <ligand>
        <name>AMP</name>
        <dbReference type="ChEBI" id="CHEBI:456215"/>
    </ligand>
</feature>
<feature type="binding site" evidence="1">
    <location>
        <position position="169"/>
    </location>
    <ligand>
        <name>ATP</name>
        <dbReference type="ChEBI" id="CHEBI:30616"/>
    </ligand>
</feature>
<feature type="binding site" evidence="1">
    <location>
        <begin position="178"/>
        <end position="179"/>
    </location>
    <ligand>
        <name>ATP</name>
        <dbReference type="ChEBI" id="CHEBI:30616"/>
    </ligand>
</feature>
<feature type="binding site" evidence="1">
    <location>
        <position position="202"/>
    </location>
    <ligand>
        <name>AMP</name>
        <dbReference type="ChEBI" id="CHEBI:456215"/>
    </ligand>
</feature>
<feature type="binding site" evidence="1">
    <location>
        <position position="213"/>
    </location>
    <ligand>
        <name>AMP</name>
        <dbReference type="ChEBI" id="CHEBI:456215"/>
    </ligand>
</feature>
<feature type="binding site" evidence="1">
    <location>
        <position position="241"/>
    </location>
    <ligand>
        <name>ATP</name>
        <dbReference type="ChEBI" id="CHEBI:30616"/>
    </ligand>
</feature>
<reference key="1">
    <citation type="journal article" date="2008" name="Genome Biol.">
        <title>The genome sequence of the model ascomycete fungus Podospora anserina.</title>
        <authorList>
            <person name="Espagne E."/>
            <person name="Lespinet O."/>
            <person name="Malagnac F."/>
            <person name="Da Silva C."/>
            <person name="Jaillon O."/>
            <person name="Porcel B.M."/>
            <person name="Couloux A."/>
            <person name="Aury J.-M."/>
            <person name="Segurens B."/>
            <person name="Poulain J."/>
            <person name="Anthouard V."/>
            <person name="Grossetete S."/>
            <person name="Khalili H."/>
            <person name="Coppin E."/>
            <person name="Dequard-Chablat M."/>
            <person name="Picard M."/>
            <person name="Contamine V."/>
            <person name="Arnaise S."/>
            <person name="Bourdais A."/>
            <person name="Berteaux-Lecellier V."/>
            <person name="Gautheret D."/>
            <person name="de Vries R.P."/>
            <person name="Battaglia E."/>
            <person name="Coutinho P.M."/>
            <person name="Danchin E.G.J."/>
            <person name="Henrissat B."/>
            <person name="El Khoury R."/>
            <person name="Sainsard-Chanet A."/>
            <person name="Boivin A."/>
            <person name="Pinan-Lucarre B."/>
            <person name="Sellem C.H."/>
            <person name="Debuchy R."/>
            <person name="Wincker P."/>
            <person name="Weissenbach J."/>
            <person name="Silar P."/>
        </authorList>
    </citation>
    <scope>NUCLEOTIDE SEQUENCE [LARGE SCALE GENOMIC DNA]</scope>
    <source>
        <strain>S / ATCC MYA-4624 / DSM 980 / FGSC 10383</strain>
    </source>
</reference>
<reference key="2">
    <citation type="journal article" date="2014" name="Genetics">
        <title>Maintaining two mating types: Structure of the mating type locus and its role in heterokaryosis in Podospora anserina.</title>
        <authorList>
            <person name="Grognet P."/>
            <person name="Bidard F."/>
            <person name="Kuchly C."/>
            <person name="Tong L.C.H."/>
            <person name="Coppin E."/>
            <person name="Benkhali J.A."/>
            <person name="Couloux A."/>
            <person name="Wincker P."/>
            <person name="Debuchy R."/>
            <person name="Silar P."/>
        </authorList>
    </citation>
    <scope>GENOME REANNOTATION</scope>
    <source>
        <strain>S / ATCC MYA-4624 / DSM 980 / FGSC 10383</strain>
    </source>
</reference>
<accession>B2B0E2</accession>
<accession>A0A090CGK4</accession>
<gene>
    <name evidence="1" type="primary">ADK1</name>
    <name type="ordered locus">Pa_3_5380</name>
    <name type="ORF">PODANS_3_5380</name>
</gene>
<evidence type="ECO:0000255" key="1">
    <source>
        <dbReference type="HAMAP-Rule" id="MF_03168"/>
    </source>
</evidence>
<dbReference type="EC" id="2.7.4.3" evidence="1"/>
<dbReference type="EMBL" id="CU638743">
    <property type="protein sequence ID" value="CAP70464.1"/>
    <property type="molecule type" value="Genomic_DNA"/>
</dbReference>
<dbReference type="EMBL" id="FO904938">
    <property type="protein sequence ID" value="CDP27055.1"/>
    <property type="molecule type" value="Genomic_DNA"/>
</dbReference>
<dbReference type="RefSeq" id="XP_001909332.1">
    <property type="nucleotide sequence ID" value="XM_001909297.1"/>
</dbReference>
<dbReference type="SMR" id="B2B0E2"/>
<dbReference type="FunCoup" id="B2B0E2">
    <property type="interactions" value="816"/>
</dbReference>
<dbReference type="STRING" id="515849.B2B0E2"/>
<dbReference type="GeneID" id="6193333"/>
<dbReference type="KEGG" id="pan:PODANSg6367"/>
<dbReference type="VEuPathDB" id="FungiDB:PODANS_3_5380"/>
<dbReference type="eggNOG" id="KOG3078">
    <property type="taxonomic scope" value="Eukaryota"/>
</dbReference>
<dbReference type="HOGENOM" id="CLU_032354_1_0_1"/>
<dbReference type="InParanoid" id="B2B0E2"/>
<dbReference type="OrthoDB" id="439792at2759"/>
<dbReference type="Proteomes" id="UP000001197">
    <property type="component" value="Chromosome 3"/>
</dbReference>
<dbReference type="GO" id="GO:0005829">
    <property type="term" value="C:cytosol"/>
    <property type="evidence" value="ECO:0007669"/>
    <property type="project" value="UniProtKB-SubCell"/>
</dbReference>
<dbReference type="GO" id="GO:0005758">
    <property type="term" value="C:mitochondrial intermembrane space"/>
    <property type="evidence" value="ECO:0007669"/>
    <property type="project" value="UniProtKB-SubCell"/>
</dbReference>
<dbReference type="GO" id="GO:0004017">
    <property type="term" value="F:adenylate kinase activity"/>
    <property type="evidence" value="ECO:0007669"/>
    <property type="project" value="UniProtKB-UniRule"/>
</dbReference>
<dbReference type="GO" id="GO:0005524">
    <property type="term" value="F:ATP binding"/>
    <property type="evidence" value="ECO:0007669"/>
    <property type="project" value="UniProtKB-KW"/>
</dbReference>
<dbReference type="GO" id="GO:0006172">
    <property type="term" value="P:ADP biosynthetic process"/>
    <property type="evidence" value="ECO:0007669"/>
    <property type="project" value="UniProtKB-UniRule"/>
</dbReference>
<dbReference type="GO" id="GO:0046033">
    <property type="term" value="P:AMP metabolic process"/>
    <property type="evidence" value="ECO:0007669"/>
    <property type="project" value="UniProtKB-UniRule"/>
</dbReference>
<dbReference type="GO" id="GO:0046034">
    <property type="term" value="P:ATP metabolic process"/>
    <property type="evidence" value="ECO:0007669"/>
    <property type="project" value="UniProtKB-UniRule"/>
</dbReference>
<dbReference type="CDD" id="cd01428">
    <property type="entry name" value="ADK"/>
    <property type="match status" value="1"/>
</dbReference>
<dbReference type="FunFam" id="3.40.50.300:FF:000106">
    <property type="entry name" value="Adenylate kinase mitochondrial"/>
    <property type="match status" value="1"/>
</dbReference>
<dbReference type="Gene3D" id="3.40.50.300">
    <property type="entry name" value="P-loop containing nucleotide triphosphate hydrolases"/>
    <property type="match status" value="1"/>
</dbReference>
<dbReference type="HAMAP" id="MF_00235">
    <property type="entry name" value="Adenylate_kinase_Adk"/>
    <property type="match status" value="1"/>
</dbReference>
<dbReference type="HAMAP" id="MF_03168">
    <property type="entry name" value="Adenylate_kinase_AK2"/>
    <property type="match status" value="1"/>
</dbReference>
<dbReference type="InterPro" id="IPR006259">
    <property type="entry name" value="Adenyl_kin_sub"/>
</dbReference>
<dbReference type="InterPro" id="IPR000850">
    <property type="entry name" value="Adenylat/UMP-CMP_kin"/>
</dbReference>
<dbReference type="InterPro" id="IPR033690">
    <property type="entry name" value="Adenylat_kinase_CS"/>
</dbReference>
<dbReference type="InterPro" id="IPR007862">
    <property type="entry name" value="Adenylate_kinase_lid-dom"/>
</dbReference>
<dbReference type="InterPro" id="IPR028587">
    <property type="entry name" value="AK2"/>
</dbReference>
<dbReference type="InterPro" id="IPR027417">
    <property type="entry name" value="P-loop_NTPase"/>
</dbReference>
<dbReference type="NCBIfam" id="TIGR01351">
    <property type="entry name" value="adk"/>
    <property type="match status" value="1"/>
</dbReference>
<dbReference type="NCBIfam" id="NF001380">
    <property type="entry name" value="PRK00279.1-2"/>
    <property type="match status" value="1"/>
</dbReference>
<dbReference type="NCBIfam" id="NF001381">
    <property type="entry name" value="PRK00279.1-3"/>
    <property type="match status" value="1"/>
</dbReference>
<dbReference type="NCBIfam" id="NF011100">
    <property type="entry name" value="PRK14527.1"/>
    <property type="match status" value="1"/>
</dbReference>
<dbReference type="PANTHER" id="PTHR23359">
    <property type="entry name" value="NUCLEOTIDE KINASE"/>
    <property type="match status" value="1"/>
</dbReference>
<dbReference type="Pfam" id="PF00406">
    <property type="entry name" value="ADK"/>
    <property type="match status" value="1"/>
</dbReference>
<dbReference type="Pfam" id="PF05191">
    <property type="entry name" value="ADK_lid"/>
    <property type="match status" value="1"/>
</dbReference>
<dbReference type="PRINTS" id="PR00094">
    <property type="entry name" value="ADENYLTKNASE"/>
</dbReference>
<dbReference type="SUPFAM" id="SSF52540">
    <property type="entry name" value="P-loop containing nucleoside triphosphate hydrolases"/>
    <property type="match status" value="1"/>
</dbReference>
<dbReference type="PROSITE" id="PS00113">
    <property type="entry name" value="ADENYLATE_KINASE"/>
    <property type="match status" value="1"/>
</dbReference>
<proteinExistence type="inferred from homology"/>